<keyword id="KW-0050">Antiport</keyword>
<keyword id="KW-1003">Cell membrane</keyword>
<keyword id="KW-0406">Ion transport</keyword>
<keyword id="KW-0472">Membrane</keyword>
<keyword id="KW-1185">Reference proteome</keyword>
<keyword id="KW-0812">Transmembrane</keyword>
<keyword id="KW-1133">Transmembrane helix</keyword>
<keyword id="KW-0813">Transport</keyword>
<feature type="chain" id="PRO_0000372265" description="Putative antiporter subunit mnhC2">
    <location>
        <begin position="1"/>
        <end position="116"/>
    </location>
</feature>
<feature type="transmembrane region" description="Helical" evidence="2">
    <location>
        <begin position="3"/>
        <end position="23"/>
    </location>
</feature>
<feature type="transmembrane region" description="Helical" evidence="2">
    <location>
        <begin position="28"/>
        <end position="48"/>
    </location>
</feature>
<feature type="transmembrane region" description="Helical" evidence="2">
    <location>
        <begin position="72"/>
        <end position="92"/>
    </location>
</feature>
<reference key="1">
    <citation type="journal article" date="2005" name="Proc. Natl. Acad. Sci. U.S.A.">
        <title>Whole genome sequence of Staphylococcus saprophyticus reveals the pathogenesis of uncomplicated urinary tract infection.</title>
        <authorList>
            <person name="Kuroda M."/>
            <person name="Yamashita A."/>
            <person name="Hirakawa H."/>
            <person name="Kumano M."/>
            <person name="Morikawa K."/>
            <person name="Higashide M."/>
            <person name="Maruyama A."/>
            <person name="Inose Y."/>
            <person name="Matoba K."/>
            <person name="Toh H."/>
            <person name="Kuhara S."/>
            <person name="Hattori M."/>
            <person name="Ohta T."/>
        </authorList>
    </citation>
    <scope>NUCLEOTIDE SEQUENCE [LARGE SCALE GENOMIC DNA]</scope>
    <source>
        <strain>ATCC 15305 / DSM 20229 / NCIMB 8711 / NCTC 7292 / S-41</strain>
    </source>
</reference>
<comment type="subunit">
    <text evidence="1">May form a heterooligomeric complex that consists of seven subunits: mnhA2, mnhB2, mnhC2, mnhD2, mnhE2, mnhF2 and mnhG2.</text>
</comment>
<comment type="subcellular location">
    <subcellularLocation>
        <location evidence="3">Cell membrane</location>
        <topology evidence="3">Multi-pass membrane protein</topology>
    </subcellularLocation>
</comment>
<comment type="similarity">
    <text evidence="3">Belongs to the CPA3 antiporters (TC 2.A.63) subunit C family.</text>
</comment>
<proteinExistence type="inferred from homology"/>
<evidence type="ECO:0000250" key="1"/>
<evidence type="ECO:0000255" key="2"/>
<evidence type="ECO:0000305" key="3"/>
<organism>
    <name type="scientific">Staphylococcus saprophyticus subsp. saprophyticus (strain ATCC 15305 / DSM 20229 / NCIMB 8711 / NCTC 7292 / S-41)</name>
    <dbReference type="NCBI Taxonomy" id="342451"/>
    <lineage>
        <taxon>Bacteria</taxon>
        <taxon>Bacillati</taxon>
        <taxon>Bacillota</taxon>
        <taxon>Bacilli</taxon>
        <taxon>Bacillales</taxon>
        <taxon>Staphylococcaceae</taxon>
        <taxon>Staphylococcus</taxon>
    </lineage>
</organism>
<name>MNHC2_STAS1</name>
<gene>
    <name type="primary">mnhC2</name>
    <name type="synonym">mrpC2</name>
    <name type="ordered locus">SSP2094</name>
</gene>
<sequence length="116" mass="12897">MNLILLMVIGFLIFIGTYMILSVNLIRIVIGISIYTHAGNLIIMSMGNYSKNKVEPLIGEGSQNFVDPLLQAIVLTAIVIGFAMTAFLLVLVYRTYRVTKEDEIDVLRGDDDDANE</sequence>
<dbReference type="EMBL" id="AP008934">
    <property type="protein sequence ID" value="BAE19239.1"/>
    <property type="molecule type" value="Genomic_DNA"/>
</dbReference>
<dbReference type="RefSeq" id="WP_011303736.1">
    <property type="nucleotide sequence ID" value="NZ_MTGA01000039.1"/>
</dbReference>
<dbReference type="SMR" id="Q49VH1"/>
<dbReference type="GeneID" id="3616302"/>
<dbReference type="KEGG" id="ssp:SSP2094"/>
<dbReference type="eggNOG" id="COG1006">
    <property type="taxonomic scope" value="Bacteria"/>
</dbReference>
<dbReference type="HOGENOM" id="CLU_082058_3_1_9"/>
<dbReference type="OrthoDB" id="9799219at2"/>
<dbReference type="Proteomes" id="UP000006371">
    <property type="component" value="Chromosome"/>
</dbReference>
<dbReference type="GO" id="GO:0005886">
    <property type="term" value="C:plasma membrane"/>
    <property type="evidence" value="ECO:0007669"/>
    <property type="project" value="UniProtKB-SubCell"/>
</dbReference>
<dbReference type="GO" id="GO:0015297">
    <property type="term" value="F:antiporter activity"/>
    <property type="evidence" value="ECO:0007669"/>
    <property type="project" value="UniProtKB-KW"/>
</dbReference>
<dbReference type="GO" id="GO:0006811">
    <property type="term" value="P:monoatomic ion transport"/>
    <property type="evidence" value="ECO:0007669"/>
    <property type="project" value="UniProtKB-KW"/>
</dbReference>
<dbReference type="Gene3D" id="1.10.287.3510">
    <property type="match status" value="1"/>
</dbReference>
<dbReference type="InterPro" id="IPR050601">
    <property type="entry name" value="CPA3_antiporter_subunitC"/>
</dbReference>
<dbReference type="InterPro" id="IPR039428">
    <property type="entry name" value="NUOK/Mnh_C1-like"/>
</dbReference>
<dbReference type="NCBIfam" id="NF009303">
    <property type="entry name" value="PRK12660.1"/>
    <property type="match status" value="1"/>
</dbReference>
<dbReference type="PANTHER" id="PTHR34583">
    <property type="entry name" value="ANTIPORTER SUBUNIT MNHC2-RELATED"/>
    <property type="match status" value="1"/>
</dbReference>
<dbReference type="PANTHER" id="PTHR34583:SF2">
    <property type="entry name" value="ANTIPORTER SUBUNIT MNHC2-RELATED"/>
    <property type="match status" value="1"/>
</dbReference>
<dbReference type="Pfam" id="PF00420">
    <property type="entry name" value="Oxidored_q2"/>
    <property type="match status" value="1"/>
</dbReference>
<accession>Q49VH1</accession>
<protein>
    <recommendedName>
        <fullName>Putative antiporter subunit mnhC2</fullName>
    </recommendedName>
    <alternativeName>
        <fullName>Mrp complex subunit C2</fullName>
    </alternativeName>
    <alternativeName>
        <fullName>Putative NADH-ubiquinone oxidoreductase subunit mnhC2</fullName>
    </alternativeName>
</protein>